<gene>
    <name evidence="1" type="primary">coaD</name>
    <name type="ordered locus">Tfu_0648</name>
</gene>
<protein>
    <recommendedName>
        <fullName evidence="1">Phosphopantetheine adenylyltransferase</fullName>
        <ecNumber evidence="1">2.7.7.3</ecNumber>
    </recommendedName>
    <alternativeName>
        <fullName evidence="1">Dephospho-CoA pyrophosphorylase</fullName>
    </alternativeName>
    <alternativeName>
        <fullName evidence="1">Pantetheine-phosphate adenylyltransferase</fullName>
        <shortName evidence="1">PPAT</shortName>
    </alternativeName>
</protein>
<dbReference type="EC" id="2.7.7.3" evidence="1"/>
<dbReference type="EMBL" id="CP000088">
    <property type="protein sequence ID" value="AAZ54686.1"/>
    <property type="molecule type" value="Genomic_DNA"/>
</dbReference>
<dbReference type="RefSeq" id="WP_011291095.1">
    <property type="nucleotide sequence ID" value="NC_007333.1"/>
</dbReference>
<dbReference type="SMR" id="Q47S81"/>
<dbReference type="STRING" id="269800.Tfu_0648"/>
<dbReference type="KEGG" id="tfu:Tfu_0648"/>
<dbReference type="eggNOG" id="COG0669">
    <property type="taxonomic scope" value="Bacteria"/>
</dbReference>
<dbReference type="HOGENOM" id="CLU_100149_0_1_11"/>
<dbReference type="OrthoDB" id="9806661at2"/>
<dbReference type="UniPathway" id="UPA00241">
    <property type="reaction ID" value="UER00355"/>
</dbReference>
<dbReference type="GO" id="GO:0005737">
    <property type="term" value="C:cytoplasm"/>
    <property type="evidence" value="ECO:0007669"/>
    <property type="project" value="UniProtKB-SubCell"/>
</dbReference>
<dbReference type="GO" id="GO:0005524">
    <property type="term" value="F:ATP binding"/>
    <property type="evidence" value="ECO:0007669"/>
    <property type="project" value="UniProtKB-KW"/>
</dbReference>
<dbReference type="GO" id="GO:0004595">
    <property type="term" value="F:pantetheine-phosphate adenylyltransferase activity"/>
    <property type="evidence" value="ECO:0007669"/>
    <property type="project" value="UniProtKB-UniRule"/>
</dbReference>
<dbReference type="GO" id="GO:0015937">
    <property type="term" value="P:coenzyme A biosynthetic process"/>
    <property type="evidence" value="ECO:0007669"/>
    <property type="project" value="UniProtKB-UniRule"/>
</dbReference>
<dbReference type="CDD" id="cd02163">
    <property type="entry name" value="PPAT"/>
    <property type="match status" value="1"/>
</dbReference>
<dbReference type="Gene3D" id="3.40.50.620">
    <property type="entry name" value="HUPs"/>
    <property type="match status" value="1"/>
</dbReference>
<dbReference type="HAMAP" id="MF_00151">
    <property type="entry name" value="PPAT_bact"/>
    <property type="match status" value="1"/>
</dbReference>
<dbReference type="InterPro" id="IPR004821">
    <property type="entry name" value="Cyt_trans-like"/>
</dbReference>
<dbReference type="InterPro" id="IPR001980">
    <property type="entry name" value="PPAT"/>
</dbReference>
<dbReference type="InterPro" id="IPR014729">
    <property type="entry name" value="Rossmann-like_a/b/a_fold"/>
</dbReference>
<dbReference type="NCBIfam" id="TIGR01510">
    <property type="entry name" value="coaD_prev_kdtB"/>
    <property type="match status" value="1"/>
</dbReference>
<dbReference type="NCBIfam" id="TIGR00125">
    <property type="entry name" value="cyt_tran_rel"/>
    <property type="match status" value="1"/>
</dbReference>
<dbReference type="PANTHER" id="PTHR21342">
    <property type="entry name" value="PHOSPHOPANTETHEINE ADENYLYLTRANSFERASE"/>
    <property type="match status" value="1"/>
</dbReference>
<dbReference type="PANTHER" id="PTHR21342:SF1">
    <property type="entry name" value="PHOSPHOPANTETHEINE ADENYLYLTRANSFERASE"/>
    <property type="match status" value="1"/>
</dbReference>
<dbReference type="Pfam" id="PF01467">
    <property type="entry name" value="CTP_transf_like"/>
    <property type="match status" value="1"/>
</dbReference>
<dbReference type="PRINTS" id="PR01020">
    <property type="entry name" value="LPSBIOSNTHSS"/>
</dbReference>
<dbReference type="SUPFAM" id="SSF52374">
    <property type="entry name" value="Nucleotidylyl transferase"/>
    <property type="match status" value="1"/>
</dbReference>
<comment type="function">
    <text evidence="1">Reversibly transfers an adenylyl group from ATP to 4'-phosphopantetheine, yielding dephospho-CoA (dPCoA) and pyrophosphate.</text>
</comment>
<comment type="catalytic activity">
    <reaction evidence="1">
        <text>(R)-4'-phosphopantetheine + ATP + H(+) = 3'-dephospho-CoA + diphosphate</text>
        <dbReference type="Rhea" id="RHEA:19801"/>
        <dbReference type="ChEBI" id="CHEBI:15378"/>
        <dbReference type="ChEBI" id="CHEBI:30616"/>
        <dbReference type="ChEBI" id="CHEBI:33019"/>
        <dbReference type="ChEBI" id="CHEBI:57328"/>
        <dbReference type="ChEBI" id="CHEBI:61723"/>
        <dbReference type="EC" id="2.7.7.3"/>
    </reaction>
</comment>
<comment type="cofactor">
    <cofactor evidence="1">
        <name>Mg(2+)</name>
        <dbReference type="ChEBI" id="CHEBI:18420"/>
    </cofactor>
</comment>
<comment type="pathway">
    <text evidence="1">Cofactor biosynthesis; coenzyme A biosynthesis; CoA from (R)-pantothenate: step 4/5.</text>
</comment>
<comment type="subunit">
    <text evidence="1">Homohexamer.</text>
</comment>
<comment type="subcellular location">
    <subcellularLocation>
        <location evidence="1">Cytoplasm</location>
    </subcellularLocation>
</comment>
<comment type="similarity">
    <text evidence="1">Belongs to the bacterial CoaD family.</text>
</comment>
<organism>
    <name type="scientific">Thermobifida fusca (strain YX)</name>
    <dbReference type="NCBI Taxonomy" id="269800"/>
    <lineage>
        <taxon>Bacteria</taxon>
        <taxon>Bacillati</taxon>
        <taxon>Actinomycetota</taxon>
        <taxon>Actinomycetes</taxon>
        <taxon>Streptosporangiales</taxon>
        <taxon>Nocardiopsidaceae</taxon>
        <taxon>Thermobifida</taxon>
    </lineage>
</organism>
<keyword id="KW-0067">ATP-binding</keyword>
<keyword id="KW-0173">Coenzyme A biosynthesis</keyword>
<keyword id="KW-0963">Cytoplasm</keyword>
<keyword id="KW-0460">Magnesium</keyword>
<keyword id="KW-0547">Nucleotide-binding</keyword>
<keyword id="KW-0548">Nucleotidyltransferase</keyword>
<keyword id="KW-0808">Transferase</keyword>
<name>COAD_THEFY</name>
<accession>Q47S81</accession>
<feature type="chain" id="PRO_1000011268" description="Phosphopantetheine adenylyltransferase">
    <location>
        <begin position="1"/>
        <end position="164"/>
    </location>
</feature>
<feature type="binding site" evidence="1">
    <location>
        <begin position="9"/>
        <end position="10"/>
    </location>
    <ligand>
        <name>ATP</name>
        <dbReference type="ChEBI" id="CHEBI:30616"/>
    </ligand>
</feature>
<feature type="binding site" evidence="1">
    <location>
        <position position="9"/>
    </location>
    <ligand>
        <name>substrate</name>
    </ligand>
</feature>
<feature type="binding site" evidence="1">
    <location>
        <position position="17"/>
    </location>
    <ligand>
        <name>ATP</name>
        <dbReference type="ChEBI" id="CHEBI:30616"/>
    </ligand>
</feature>
<feature type="binding site" evidence="1">
    <location>
        <position position="41"/>
    </location>
    <ligand>
        <name>substrate</name>
    </ligand>
</feature>
<feature type="binding site" evidence="1">
    <location>
        <position position="73"/>
    </location>
    <ligand>
        <name>substrate</name>
    </ligand>
</feature>
<feature type="binding site" evidence="1">
    <location>
        <position position="87"/>
    </location>
    <ligand>
        <name>substrate</name>
    </ligand>
</feature>
<feature type="binding site" evidence="1">
    <location>
        <position position="98"/>
    </location>
    <ligand>
        <name>ATP</name>
        <dbReference type="ChEBI" id="CHEBI:30616"/>
    </ligand>
</feature>
<feature type="binding site" evidence="1">
    <location>
        <begin position="122"/>
        <end position="128"/>
    </location>
    <ligand>
        <name>ATP</name>
        <dbReference type="ChEBI" id="CHEBI:30616"/>
    </ligand>
</feature>
<feature type="site" description="Transition state stabilizer" evidence="1">
    <location>
        <position position="17"/>
    </location>
</feature>
<evidence type="ECO:0000255" key="1">
    <source>
        <dbReference type="HAMAP-Rule" id="MF_00151"/>
    </source>
</evidence>
<reference key="1">
    <citation type="journal article" date="2007" name="J. Bacteriol.">
        <title>Genome sequence and analysis of the soil cellulolytic actinomycete Thermobifida fusca YX.</title>
        <authorList>
            <person name="Lykidis A."/>
            <person name="Mavromatis K."/>
            <person name="Ivanova N."/>
            <person name="Anderson I."/>
            <person name="Land M."/>
            <person name="DiBartolo G."/>
            <person name="Martinez M."/>
            <person name="Lapidus A."/>
            <person name="Lucas S."/>
            <person name="Copeland A."/>
            <person name="Richardson P."/>
            <person name="Wilson D.B."/>
            <person name="Kyrpides N."/>
        </authorList>
    </citation>
    <scope>NUCLEOTIDE SEQUENCE [LARGE SCALE GENOMIC DNA]</scope>
    <source>
        <strain>YX</strain>
    </source>
</reference>
<sequence>MRRVVCPGSFDPVTNGHIDIIRRAAKQNEEVIVAVLVNVNKRGLFTADEKLEMLREATKEFDNVTVAKFDGLLVDFCRAHDVSAIVRSLRSVSDFDYELQIAQMNYQLSGIDTLFLTANPKYSFLSSSLVREIAQYNGDVSALVPPYVEERLRAKYAELAKKNG</sequence>
<proteinExistence type="inferred from homology"/>